<dbReference type="EC" id="3.5.4.41" evidence="1"/>
<dbReference type="EC" id="3.5.4.31" evidence="1"/>
<dbReference type="EC" id="3.5.4.4" evidence="1"/>
<dbReference type="EC" id="3.5.4.28" evidence="1"/>
<dbReference type="EMBL" id="CP000678">
    <property type="protein sequence ID" value="ABQ87464.1"/>
    <property type="molecule type" value="Genomic_DNA"/>
</dbReference>
<dbReference type="RefSeq" id="WP_004032662.1">
    <property type="nucleotide sequence ID" value="NZ_CP117965.1"/>
</dbReference>
<dbReference type="SMR" id="A5UMN6"/>
<dbReference type="STRING" id="420247.Msm_1259"/>
<dbReference type="EnsemblBacteria" id="ABQ87464">
    <property type="protein sequence ID" value="ABQ87464"/>
    <property type="gene ID" value="Msm_1259"/>
</dbReference>
<dbReference type="KEGG" id="msi:Msm_1259"/>
<dbReference type="PATRIC" id="fig|420247.28.peg.1257"/>
<dbReference type="eggNOG" id="arCOG00695">
    <property type="taxonomic scope" value="Archaea"/>
</dbReference>
<dbReference type="HOGENOM" id="CLU_012358_2_1_2"/>
<dbReference type="UniPathway" id="UPA00315"/>
<dbReference type="Proteomes" id="UP000001992">
    <property type="component" value="Chromosome"/>
</dbReference>
<dbReference type="GO" id="GO:0090613">
    <property type="term" value="F:5'-deoxyadenosine deaminase activity"/>
    <property type="evidence" value="ECO:0007669"/>
    <property type="project" value="UniProtKB-UniRule"/>
</dbReference>
<dbReference type="GO" id="GO:0090614">
    <property type="term" value="F:5'-methylthioadenosine deaminase activity"/>
    <property type="evidence" value="ECO:0007669"/>
    <property type="project" value="UniProtKB-EC"/>
</dbReference>
<dbReference type="GO" id="GO:0004000">
    <property type="term" value="F:adenosine deaminase activity"/>
    <property type="evidence" value="ECO:0007669"/>
    <property type="project" value="UniProtKB-UniRule"/>
</dbReference>
<dbReference type="GO" id="GO:0046872">
    <property type="term" value="F:metal ion binding"/>
    <property type="evidence" value="ECO:0007669"/>
    <property type="project" value="UniProtKB-KW"/>
</dbReference>
<dbReference type="GO" id="GO:0050270">
    <property type="term" value="F:S-adenosylhomocysteine deaminase activity"/>
    <property type="evidence" value="ECO:0007669"/>
    <property type="project" value="UniProtKB-EC"/>
</dbReference>
<dbReference type="GO" id="GO:0006556">
    <property type="term" value="P:S-adenosylmethionine biosynthetic process"/>
    <property type="evidence" value="ECO:0007669"/>
    <property type="project" value="UniProtKB-UniRule"/>
</dbReference>
<dbReference type="CDD" id="cd01298">
    <property type="entry name" value="ATZ_TRZ_like"/>
    <property type="match status" value="1"/>
</dbReference>
<dbReference type="FunFam" id="3.20.20.140:FF:000014">
    <property type="entry name" value="5-methylthioadenosine/S-adenosylhomocysteine deaminase"/>
    <property type="match status" value="1"/>
</dbReference>
<dbReference type="Gene3D" id="3.20.20.140">
    <property type="entry name" value="Metal-dependent hydrolases"/>
    <property type="match status" value="1"/>
</dbReference>
<dbReference type="Gene3D" id="2.30.40.10">
    <property type="entry name" value="Urease, subunit C, domain 1"/>
    <property type="match status" value="1"/>
</dbReference>
<dbReference type="HAMAP" id="MF_01281">
    <property type="entry name" value="MTA_SAH_deamin"/>
    <property type="match status" value="1"/>
</dbReference>
<dbReference type="InterPro" id="IPR006680">
    <property type="entry name" value="Amidohydro-rel"/>
</dbReference>
<dbReference type="InterPro" id="IPR023512">
    <property type="entry name" value="Deaminase_MtaD/DadD"/>
</dbReference>
<dbReference type="InterPro" id="IPR011059">
    <property type="entry name" value="Metal-dep_hydrolase_composite"/>
</dbReference>
<dbReference type="InterPro" id="IPR032466">
    <property type="entry name" value="Metal_Hydrolase"/>
</dbReference>
<dbReference type="InterPro" id="IPR050287">
    <property type="entry name" value="MTA/SAH_deaminase"/>
</dbReference>
<dbReference type="PANTHER" id="PTHR43794:SF11">
    <property type="entry name" value="AMIDOHYDROLASE-RELATED DOMAIN-CONTAINING PROTEIN"/>
    <property type="match status" value="1"/>
</dbReference>
<dbReference type="PANTHER" id="PTHR43794">
    <property type="entry name" value="AMINOHYDROLASE SSNA-RELATED"/>
    <property type="match status" value="1"/>
</dbReference>
<dbReference type="Pfam" id="PF01979">
    <property type="entry name" value="Amidohydro_1"/>
    <property type="match status" value="1"/>
</dbReference>
<dbReference type="SUPFAM" id="SSF51338">
    <property type="entry name" value="Composite domain of metallo-dependent hydrolases"/>
    <property type="match status" value="1"/>
</dbReference>
<dbReference type="SUPFAM" id="SSF51556">
    <property type="entry name" value="Metallo-dependent hydrolases"/>
    <property type="match status" value="1"/>
</dbReference>
<organism>
    <name type="scientific">Methanobrevibacter smithii (strain ATCC 35061 / DSM 861 / OCM 144 / PS)</name>
    <dbReference type="NCBI Taxonomy" id="420247"/>
    <lineage>
        <taxon>Archaea</taxon>
        <taxon>Methanobacteriati</taxon>
        <taxon>Methanobacteriota</taxon>
        <taxon>Methanomada group</taxon>
        <taxon>Methanobacteria</taxon>
        <taxon>Methanobacteriales</taxon>
        <taxon>Methanobacteriaceae</taxon>
        <taxon>Methanobrevibacter</taxon>
    </lineage>
</organism>
<comment type="function">
    <text evidence="1">Catalyzes the deamination of three SAM-derived enzymatic products, namely 5'-deoxyadenosine, S-adenosyl-L-homocysteine, and 5'-methylthioadenosine, to produce the inosine analogs. Can also deaminate adenosine. The preferred substrate for this enzyme is 5'-deoxyadenosine, but all these substrates are efficiently deaminated. Likely functions in a S-adenosyl-L-methionine (SAM) recycling pathway from S-adenosyl-L-homocysteine (SAH) produced from SAM-dependent methylation reactions. May also be involved in the recycling of 5'-deoxyadenosine, whereupon the 5'-deoxyribose moiety of 5'-deoxyinosine is further metabolized to deoxyhexoses used for the biosynthesis of aromatic amino acids in methanogens.</text>
</comment>
<comment type="catalytic activity">
    <reaction evidence="1">
        <text>5'-deoxyadenosine + H2O + H(+) = 5'-deoxyinosine + NH4(+)</text>
        <dbReference type="Rhea" id="RHEA:42892"/>
        <dbReference type="ChEBI" id="CHEBI:15377"/>
        <dbReference type="ChEBI" id="CHEBI:15378"/>
        <dbReference type="ChEBI" id="CHEBI:17319"/>
        <dbReference type="ChEBI" id="CHEBI:28938"/>
        <dbReference type="ChEBI" id="CHEBI:82775"/>
        <dbReference type="EC" id="3.5.4.41"/>
    </reaction>
    <physiologicalReaction direction="left-to-right" evidence="1">
        <dbReference type="Rhea" id="RHEA:42893"/>
    </physiologicalReaction>
</comment>
<comment type="catalytic activity">
    <reaction evidence="1">
        <text>S-adenosyl-L-homocysteine + H2O + H(+) = S-inosyl-L-homocysteine + NH4(+)</text>
        <dbReference type="Rhea" id="RHEA:20716"/>
        <dbReference type="ChEBI" id="CHEBI:15377"/>
        <dbReference type="ChEBI" id="CHEBI:15378"/>
        <dbReference type="ChEBI" id="CHEBI:28938"/>
        <dbReference type="ChEBI" id="CHEBI:57856"/>
        <dbReference type="ChEBI" id="CHEBI:57985"/>
        <dbReference type="EC" id="3.5.4.28"/>
    </reaction>
    <physiologicalReaction direction="left-to-right" evidence="1">
        <dbReference type="Rhea" id="RHEA:20717"/>
    </physiologicalReaction>
</comment>
<comment type="catalytic activity">
    <reaction evidence="1">
        <text>S-methyl-5'-thioadenosine + H2O + H(+) = S-methyl-5'-thioinosine + NH4(+)</text>
        <dbReference type="Rhea" id="RHEA:25025"/>
        <dbReference type="ChEBI" id="CHEBI:15377"/>
        <dbReference type="ChEBI" id="CHEBI:15378"/>
        <dbReference type="ChEBI" id="CHEBI:17509"/>
        <dbReference type="ChEBI" id="CHEBI:28938"/>
        <dbReference type="ChEBI" id="CHEBI:48595"/>
        <dbReference type="EC" id="3.5.4.31"/>
    </reaction>
    <physiologicalReaction direction="left-to-right" evidence="1">
        <dbReference type="Rhea" id="RHEA:25026"/>
    </physiologicalReaction>
</comment>
<comment type="catalytic activity">
    <reaction evidence="1">
        <text>adenosine + H2O + H(+) = inosine + NH4(+)</text>
        <dbReference type="Rhea" id="RHEA:24408"/>
        <dbReference type="ChEBI" id="CHEBI:15377"/>
        <dbReference type="ChEBI" id="CHEBI:15378"/>
        <dbReference type="ChEBI" id="CHEBI:16335"/>
        <dbReference type="ChEBI" id="CHEBI:17596"/>
        <dbReference type="ChEBI" id="CHEBI:28938"/>
        <dbReference type="EC" id="3.5.4.4"/>
    </reaction>
    <physiologicalReaction direction="left-to-right" evidence="1">
        <dbReference type="Rhea" id="RHEA:24409"/>
    </physiologicalReaction>
</comment>
<comment type="cofactor">
    <cofactor evidence="1">
        <name>Zn(2+)</name>
        <dbReference type="ChEBI" id="CHEBI:29105"/>
    </cofactor>
    <text evidence="1">Binds 1 zinc ion per subunit.</text>
</comment>
<comment type="pathway">
    <text evidence="1">Amino-acid biosynthesis; S-adenosyl-L-methionine biosynthesis.</text>
</comment>
<comment type="subunit">
    <text evidence="1">Homotetramer.</text>
</comment>
<comment type="miscellaneous">
    <text evidence="1">SAH is a product of SAM methyltransferases and is known to be a feedback inhibitor of these enzymes. As a result of this inhibition, organisms have evolved efficient enzymes to metabolize SAH via different pathways. The pathway found in methanogens differs from the canonical pathway, it uses the deamination of S-adenosyl-L-homocysteine to form S-inosyl-L-homocysteine for the regeneration of SAM from S-adenosyl-L-homocysteine. 5'-deoxyadenosine is a radical SAM enzyme reaction product which strongly inhibits radical SAM enzymes. A pathway for removing this product must be present in methanogens where the MTA/SAH nucleosidase which normally metabolizes this compound is absent.</text>
</comment>
<comment type="similarity">
    <text evidence="1">Belongs to the metallo-dependent hydrolases superfamily. MTA/SAH deaminase family.</text>
</comment>
<feature type="chain" id="PRO_0000312469" description="5'-deoxyadenosine deaminase">
    <location>
        <begin position="1"/>
        <end position="435"/>
    </location>
</feature>
<feature type="binding site" evidence="1">
    <location>
        <position position="64"/>
    </location>
    <ligand>
        <name>Zn(2+)</name>
        <dbReference type="ChEBI" id="CHEBI:29105"/>
    </ligand>
</feature>
<feature type="binding site" evidence="1">
    <location>
        <position position="66"/>
    </location>
    <ligand>
        <name>Zn(2+)</name>
        <dbReference type="ChEBI" id="CHEBI:29105"/>
    </ligand>
</feature>
<feature type="binding site" evidence="1">
    <location>
        <position position="93"/>
    </location>
    <ligand>
        <name>substrate</name>
    </ligand>
</feature>
<feature type="binding site" evidence="1">
    <location>
        <position position="185"/>
    </location>
    <ligand>
        <name>substrate</name>
    </ligand>
</feature>
<feature type="binding site" evidence="1">
    <location>
        <position position="212"/>
    </location>
    <ligand>
        <name>Zn(2+)</name>
        <dbReference type="ChEBI" id="CHEBI:29105"/>
    </ligand>
</feature>
<feature type="binding site" evidence="1">
    <location>
        <position position="215"/>
    </location>
    <ligand>
        <name>substrate</name>
    </ligand>
</feature>
<feature type="binding site" evidence="1">
    <location>
        <position position="300"/>
    </location>
    <ligand>
        <name>substrate</name>
    </ligand>
</feature>
<feature type="binding site" evidence="1">
    <location>
        <position position="300"/>
    </location>
    <ligand>
        <name>Zn(2+)</name>
        <dbReference type="ChEBI" id="CHEBI:29105"/>
    </ligand>
</feature>
<accession>A5UMN6</accession>
<gene>
    <name evidence="1" type="primary">dadD</name>
    <name type="ordered locus">Msm_1259</name>
</gene>
<name>DADD_METS3</name>
<reference key="1">
    <citation type="journal article" date="2007" name="Proc. Natl. Acad. Sci. U.S.A.">
        <title>Genomic and metabolic adaptations of Methanobrevibacter smithii to the human gut.</title>
        <authorList>
            <person name="Samuel B.S."/>
            <person name="Hansen E.E."/>
            <person name="Manchester J.K."/>
            <person name="Coutinho P.M."/>
            <person name="Henrissat B."/>
            <person name="Fulton R."/>
            <person name="Latreille P."/>
            <person name="Kim K."/>
            <person name="Wilson R.K."/>
            <person name="Gordon J.I."/>
        </authorList>
    </citation>
    <scope>NUCLEOTIDE SEQUENCE [LARGE SCALE GENOMIC DNA]</scope>
    <source>
        <strain>ATCC 35061 / DSM 861 / OCM 144 / PS</strain>
    </source>
</reference>
<keyword id="KW-0378">Hydrolase</keyword>
<keyword id="KW-0479">Metal-binding</keyword>
<keyword id="KW-0862">Zinc</keyword>
<evidence type="ECO:0000255" key="1">
    <source>
        <dbReference type="HAMAP-Rule" id="MF_01281"/>
    </source>
</evidence>
<sequence length="435" mass="48014">MTDNTILIKDALILNPLDFKEIKGSLLIKNDKIAEIGTDIDESNVDKVIDAKGKILLPGFVNTHTHLSMTLFRGLADDLSLDSWLNDNIWPMEANLTSEYCYIGALLGAIELIKSGTTTFSDMYFYMEDVAKAVEESGIRAVLSYGMIDFGDDEKREHEIKENIALFEKCNGMADGRIKVFFGPHSPYTASKDLLEDVRWLANEYNTGIHIHVSETQKEINDSLEAHDLRPFEYLDSIGFLGPDVVAAHSVWLSHNEIEIIKRNNVKISHNPCSNMKLASGIAPIQDLITNDICVGIGTDGASSNNNLDLIEELRTASLLQKVNLLNPKALTSNEALAMGTIKGAEVLGLEQEIGSIEVGKKADLILIDTNNANMVPDSSATSSNIIYSANGYNVDTTICDGKILMENRKLTTLDEEEIYKKARKAIEELKEASK</sequence>
<protein>
    <recommendedName>
        <fullName evidence="1">5'-deoxyadenosine deaminase</fullName>
        <shortName evidence="1">5'-dA deaminase</shortName>
        <ecNumber evidence="1">3.5.4.41</ecNumber>
    </recommendedName>
    <alternativeName>
        <fullName evidence="1">5'-methylthioadenosine deaminase</fullName>
        <shortName evidence="1">MTA deaminase</shortName>
        <ecNumber evidence="1">3.5.4.31</ecNumber>
    </alternativeName>
    <alternativeName>
        <fullName evidence="1">Adenosine deaminase</fullName>
        <ecNumber evidence="1">3.5.4.4</ecNumber>
    </alternativeName>
    <alternativeName>
        <fullName evidence="1">S-adenosylhomocysteine deaminase</fullName>
        <shortName evidence="1">SAH deaminase</shortName>
        <ecNumber evidence="1">3.5.4.28</ecNumber>
    </alternativeName>
</protein>
<proteinExistence type="inferred from homology"/>